<evidence type="ECO:0000255" key="1">
    <source>
        <dbReference type="HAMAP-Rule" id="MF_00337"/>
    </source>
</evidence>
<sequence>MSKQKKFEENLAELETIVQSLENGEIALEDAITAFQKGMVLSKELQATLDKAEKTLVKVMQEDGTESDFE</sequence>
<name>EX7S_STRPN</name>
<accession>P67465</accession>
<accession>Q97QJ9</accession>
<organism>
    <name type="scientific">Streptococcus pneumoniae serotype 4 (strain ATCC BAA-334 / TIGR4)</name>
    <dbReference type="NCBI Taxonomy" id="170187"/>
    <lineage>
        <taxon>Bacteria</taxon>
        <taxon>Bacillati</taxon>
        <taxon>Bacillota</taxon>
        <taxon>Bacilli</taxon>
        <taxon>Lactobacillales</taxon>
        <taxon>Streptococcaceae</taxon>
        <taxon>Streptococcus</taxon>
    </lineage>
</organism>
<dbReference type="EC" id="3.1.11.6" evidence="1"/>
<dbReference type="EMBL" id="AE005672">
    <property type="protein sequence ID" value="AAK75313.1"/>
    <property type="molecule type" value="Genomic_DNA"/>
</dbReference>
<dbReference type="PIR" id="H95139">
    <property type="entry name" value="H95139"/>
</dbReference>
<dbReference type="RefSeq" id="WP_000043230.1">
    <property type="nucleotide sequence ID" value="NZ_CP155539.1"/>
</dbReference>
<dbReference type="SMR" id="P67465"/>
<dbReference type="PaxDb" id="170187-SP_1206"/>
<dbReference type="EnsemblBacteria" id="AAK75313">
    <property type="protein sequence ID" value="AAK75313"/>
    <property type="gene ID" value="SP_1206"/>
</dbReference>
<dbReference type="KEGG" id="spn:SP_1206"/>
<dbReference type="eggNOG" id="COG1722">
    <property type="taxonomic scope" value="Bacteria"/>
</dbReference>
<dbReference type="PhylomeDB" id="P67465"/>
<dbReference type="BioCyc" id="SPNE170187:G1FZB-1222-MONOMER"/>
<dbReference type="Proteomes" id="UP000000585">
    <property type="component" value="Chromosome"/>
</dbReference>
<dbReference type="GO" id="GO:0005829">
    <property type="term" value="C:cytosol"/>
    <property type="evidence" value="ECO:0007669"/>
    <property type="project" value="TreeGrafter"/>
</dbReference>
<dbReference type="GO" id="GO:0009318">
    <property type="term" value="C:exodeoxyribonuclease VII complex"/>
    <property type="evidence" value="ECO:0007669"/>
    <property type="project" value="InterPro"/>
</dbReference>
<dbReference type="GO" id="GO:0008855">
    <property type="term" value="F:exodeoxyribonuclease VII activity"/>
    <property type="evidence" value="ECO:0007669"/>
    <property type="project" value="UniProtKB-UniRule"/>
</dbReference>
<dbReference type="GO" id="GO:0006308">
    <property type="term" value="P:DNA catabolic process"/>
    <property type="evidence" value="ECO:0007669"/>
    <property type="project" value="UniProtKB-UniRule"/>
</dbReference>
<dbReference type="FunFam" id="1.10.287.1040:FF:000003">
    <property type="entry name" value="Exodeoxyribonuclease 7 small subunit"/>
    <property type="match status" value="1"/>
</dbReference>
<dbReference type="Gene3D" id="1.10.287.1040">
    <property type="entry name" value="Exonuclease VII, small subunit"/>
    <property type="match status" value="1"/>
</dbReference>
<dbReference type="HAMAP" id="MF_00337">
    <property type="entry name" value="Exonuc_7_S"/>
    <property type="match status" value="1"/>
</dbReference>
<dbReference type="InterPro" id="IPR003761">
    <property type="entry name" value="Exonuc_VII_S"/>
</dbReference>
<dbReference type="InterPro" id="IPR037004">
    <property type="entry name" value="Exonuc_VII_ssu_sf"/>
</dbReference>
<dbReference type="NCBIfam" id="NF002138">
    <property type="entry name" value="PRK00977.1-2"/>
    <property type="match status" value="1"/>
</dbReference>
<dbReference type="NCBIfam" id="TIGR01280">
    <property type="entry name" value="xseB"/>
    <property type="match status" value="1"/>
</dbReference>
<dbReference type="PANTHER" id="PTHR34137">
    <property type="entry name" value="EXODEOXYRIBONUCLEASE 7 SMALL SUBUNIT"/>
    <property type="match status" value="1"/>
</dbReference>
<dbReference type="PANTHER" id="PTHR34137:SF1">
    <property type="entry name" value="EXODEOXYRIBONUCLEASE 7 SMALL SUBUNIT"/>
    <property type="match status" value="1"/>
</dbReference>
<dbReference type="Pfam" id="PF02609">
    <property type="entry name" value="Exonuc_VII_S"/>
    <property type="match status" value="1"/>
</dbReference>
<dbReference type="PIRSF" id="PIRSF006488">
    <property type="entry name" value="Exonuc_VII_S"/>
    <property type="match status" value="1"/>
</dbReference>
<dbReference type="SUPFAM" id="SSF116842">
    <property type="entry name" value="XseB-like"/>
    <property type="match status" value="1"/>
</dbReference>
<keyword id="KW-0963">Cytoplasm</keyword>
<keyword id="KW-0269">Exonuclease</keyword>
<keyword id="KW-0378">Hydrolase</keyword>
<keyword id="KW-0540">Nuclease</keyword>
<keyword id="KW-1185">Reference proteome</keyword>
<feature type="chain" id="PRO_0000207016" description="Exodeoxyribonuclease 7 small subunit">
    <location>
        <begin position="1"/>
        <end position="70"/>
    </location>
</feature>
<reference key="1">
    <citation type="journal article" date="2001" name="Science">
        <title>Complete genome sequence of a virulent isolate of Streptococcus pneumoniae.</title>
        <authorList>
            <person name="Tettelin H."/>
            <person name="Nelson K.E."/>
            <person name="Paulsen I.T."/>
            <person name="Eisen J.A."/>
            <person name="Read T.D."/>
            <person name="Peterson S.N."/>
            <person name="Heidelberg J.F."/>
            <person name="DeBoy R.T."/>
            <person name="Haft D.H."/>
            <person name="Dodson R.J."/>
            <person name="Durkin A.S."/>
            <person name="Gwinn M.L."/>
            <person name="Kolonay J.F."/>
            <person name="Nelson W.C."/>
            <person name="Peterson J.D."/>
            <person name="Umayam L.A."/>
            <person name="White O."/>
            <person name="Salzberg S.L."/>
            <person name="Lewis M.R."/>
            <person name="Radune D."/>
            <person name="Holtzapple E.K."/>
            <person name="Khouri H.M."/>
            <person name="Wolf A.M."/>
            <person name="Utterback T.R."/>
            <person name="Hansen C.L."/>
            <person name="McDonald L.A."/>
            <person name="Feldblyum T.V."/>
            <person name="Angiuoli S.V."/>
            <person name="Dickinson T."/>
            <person name="Hickey E.K."/>
            <person name="Holt I.E."/>
            <person name="Loftus B.J."/>
            <person name="Yang F."/>
            <person name="Smith H.O."/>
            <person name="Venter J.C."/>
            <person name="Dougherty B.A."/>
            <person name="Morrison D.A."/>
            <person name="Hollingshead S.K."/>
            <person name="Fraser C.M."/>
        </authorList>
    </citation>
    <scope>NUCLEOTIDE SEQUENCE [LARGE SCALE GENOMIC DNA]</scope>
    <source>
        <strain>ATCC BAA-334 / TIGR4</strain>
    </source>
</reference>
<comment type="function">
    <text evidence="1">Bidirectionally degrades single-stranded DNA into large acid-insoluble oligonucleotides, which are then degraded further into small acid-soluble oligonucleotides.</text>
</comment>
<comment type="catalytic activity">
    <reaction evidence="1">
        <text>Exonucleolytic cleavage in either 5'- to 3'- or 3'- to 5'-direction to yield nucleoside 5'-phosphates.</text>
        <dbReference type="EC" id="3.1.11.6"/>
    </reaction>
</comment>
<comment type="subunit">
    <text evidence="1">Heterooligomer composed of large and small subunits.</text>
</comment>
<comment type="subcellular location">
    <subcellularLocation>
        <location evidence="1">Cytoplasm</location>
    </subcellularLocation>
</comment>
<comment type="similarity">
    <text evidence="1">Belongs to the XseB family.</text>
</comment>
<proteinExistence type="inferred from homology"/>
<protein>
    <recommendedName>
        <fullName evidence="1">Exodeoxyribonuclease 7 small subunit</fullName>
        <ecNumber evidence="1">3.1.11.6</ecNumber>
    </recommendedName>
    <alternativeName>
        <fullName evidence="1">Exodeoxyribonuclease VII small subunit</fullName>
        <shortName evidence="1">Exonuclease VII small subunit</shortName>
    </alternativeName>
</protein>
<gene>
    <name evidence="1" type="primary">xseB</name>
    <name type="ordered locus">SP_1206</name>
</gene>